<organism>
    <name type="scientific">Xenopus laevis</name>
    <name type="common">African clawed frog</name>
    <dbReference type="NCBI Taxonomy" id="8355"/>
    <lineage>
        <taxon>Eukaryota</taxon>
        <taxon>Metazoa</taxon>
        <taxon>Chordata</taxon>
        <taxon>Craniata</taxon>
        <taxon>Vertebrata</taxon>
        <taxon>Euteleostomi</taxon>
        <taxon>Amphibia</taxon>
        <taxon>Batrachia</taxon>
        <taxon>Anura</taxon>
        <taxon>Pipoidea</taxon>
        <taxon>Pipidae</taxon>
        <taxon>Xenopodinae</taxon>
        <taxon>Xenopus</taxon>
        <taxon>Xenopus</taxon>
    </lineage>
</organism>
<feature type="chain" id="PRO_0000253463" description="Homeobox protein CDX-1">
    <location>
        <begin position="1"/>
        <end position="263"/>
    </location>
</feature>
<feature type="DNA-binding region" description="Homeobox" evidence="2">
    <location>
        <begin position="150"/>
        <end position="209"/>
    </location>
</feature>
<feature type="region of interest" description="Disordered" evidence="3">
    <location>
        <begin position="47"/>
        <end position="108"/>
    </location>
</feature>
<feature type="region of interest" description="Interaction with DNA" evidence="1">
    <location>
        <begin position="153"/>
        <end position="174"/>
    </location>
</feature>
<feature type="region of interest" description="Interaction with 5-mCpG DNA" evidence="1">
    <location>
        <begin position="192"/>
        <end position="203"/>
    </location>
</feature>
<feature type="region of interest" description="Disordered" evidence="3">
    <location>
        <begin position="204"/>
        <end position="263"/>
    </location>
</feature>
<feature type="compositionally biased region" description="Polar residues" evidence="3">
    <location>
        <begin position="82"/>
        <end position="97"/>
    </location>
</feature>
<feature type="compositionally biased region" description="Basic residues" evidence="3">
    <location>
        <begin position="204"/>
        <end position="213"/>
    </location>
</feature>
<feature type="compositionally biased region" description="Low complexity" evidence="3">
    <location>
        <begin position="214"/>
        <end position="233"/>
    </location>
</feature>
<feature type="compositionally biased region" description="Low complexity" evidence="3">
    <location>
        <begin position="241"/>
        <end position="254"/>
    </location>
</feature>
<proteinExistence type="evidence at transcript level"/>
<dbReference type="EMBL" id="U04302">
    <property type="protein sequence ID" value="AAA03642.1"/>
    <property type="molecule type" value="mRNA"/>
</dbReference>
<dbReference type="PIR" id="A40856">
    <property type="entry name" value="A40856"/>
</dbReference>
<dbReference type="RefSeq" id="NP_001081175.1">
    <property type="nucleotide sequence ID" value="NM_001087706.1"/>
</dbReference>
<dbReference type="SMR" id="Q91622"/>
<dbReference type="GeneID" id="397695"/>
<dbReference type="KEGG" id="xla:397695"/>
<dbReference type="AGR" id="Xenbase:XB-GENE-864834"/>
<dbReference type="CTD" id="397695"/>
<dbReference type="Xenbase" id="XB-GENE-864834">
    <property type="gene designation" value="cdx1.S"/>
</dbReference>
<dbReference type="OrthoDB" id="6159439at2759"/>
<dbReference type="Proteomes" id="UP000186698">
    <property type="component" value="Chromosome 3S"/>
</dbReference>
<dbReference type="Bgee" id="397695">
    <property type="expression patterns" value="Expressed in intestine and 2 other cell types or tissues"/>
</dbReference>
<dbReference type="GO" id="GO:0005634">
    <property type="term" value="C:nucleus"/>
    <property type="evidence" value="ECO:0000318"/>
    <property type="project" value="GO_Central"/>
</dbReference>
<dbReference type="GO" id="GO:0003700">
    <property type="term" value="F:DNA-binding transcription factor activity"/>
    <property type="evidence" value="ECO:0000318"/>
    <property type="project" value="GO_Central"/>
</dbReference>
<dbReference type="GO" id="GO:0000981">
    <property type="term" value="F:DNA-binding transcription factor activity, RNA polymerase II-specific"/>
    <property type="evidence" value="ECO:0007669"/>
    <property type="project" value="InterPro"/>
</dbReference>
<dbReference type="GO" id="GO:0008327">
    <property type="term" value="F:methyl-CpG binding"/>
    <property type="evidence" value="ECO:0000250"/>
    <property type="project" value="UniProtKB"/>
</dbReference>
<dbReference type="GO" id="GO:0000977">
    <property type="term" value="F:RNA polymerase II transcription regulatory region sequence-specific DNA binding"/>
    <property type="evidence" value="ECO:0000318"/>
    <property type="project" value="GO_Central"/>
</dbReference>
<dbReference type="GO" id="GO:0000976">
    <property type="term" value="F:transcription cis-regulatory region binding"/>
    <property type="evidence" value="ECO:0000250"/>
    <property type="project" value="UniProtKB"/>
</dbReference>
<dbReference type="GO" id="GO:0009887">
    <property type="term" value="P:animal organ morphogenesis"/>
    <property type="evidence" value="ECO:0007669"/>
    <property type="project" value="TreeGrafter"/>
</dbReference>
<dbReference type="GO" id="GO:0009948">
    <property type="term" value="P:anterior/posterior axis specification"/>
    <property type="evidence" value="ECO:0000318"/>
    <property type="project" value="GO_Central"/>
</dbReference>
<dbReference type="GO" id="GO:0030154">
    <property type="term" value="P:cell differentiation"/>
    <property type="evidence" value="ECO:0000318"/>
    <property type="project" value="GO_Central"/>
</dbReference>
<dbReference type="GO" id="GO:0048565">
    <property type="term" value="P:digestive tract development"/>
    <property type="evidence" value="ECO:0000318"/>
    <property type="project" value="GO_Central"/>
</dbReference>
<dbReference type="GO" id="GO:0009880">
    <property type="term" value="P:embryonic pattern specification"/>
    <property type="evidence" value="ECO:0000318"/>
    <property type="project" value="GO_Central"/>
</dbReference>
<dbReference type="GO" id="GO:0045944">
    <property type="term" value="P:positive regulation of transcription by RNA polymerase II"/>
    <property type="evidence" value="ECO:0000250"/>
    <property type="project" value="UniProtKB"/>
</dbReference>
<dbReference type="GO" id="GO:0006357">
    <property type="term" value="P:regulation of transcription by RNA polymerase II"/>
    <property type="evidence" value="ECO:0000318"/>
    <property type="project" value="GO_Central"/>
</dbReference>
<dbReference type="CDD" id="cd00086">
    <property type="entry name" value="homeodomain"/>
    <property type="match status" value="1"/>
</dbReference>
<dbReference type="FunFam" id="1.10.10.60:FF:000089">
    <property type="entry name" value="Caudal type homeobox 4"/>
    <property type="match status" value="1"/>
</dbReference>
<dbReference type="Gene3D" id="1.10.10.60">
    <property type="entry name" value="Homeodomain-like"/>
    <property type="match status" value="1"/>
</dbReference>
<dbReference type="InterPro" id="IPR006820">
    <property type="entry name" value="Caudal_activation_dom"/>
</dbReference>
<dbReference type="InterPro" id="IPR047152">
    <property type="entry name" value="Caudal_homeobox"/>
</dbReference>
<dbReference type="InterPro" id="IPR001356">
    <property type="entry name" value="HD"/>
</dbReference>
<dbReference type="InterPro" id="IPR020479">
    <property type="entry name" value="HD_metazoa"/>
</dbReference>
<dbReference type="InterPro" id="IPR017970">
    <property type="entry name" value="Homeobox_CS"/>
</dbReference>
<dbReference type="InterPro" id="IPR009057">
    <property type="entry name" value="Homeodomain-like_sf"/>
</dbReference>
<dbReference type="InterPro" id="IPR000047">
    <property type="entry name" value="HTH_motif"/>
</dbReference>
<dbReference type="PANTHER" id="PTHR24332">
    <property type="entry name" value="HOMEOBOX PROTEIN CDX"/>
    <property type="match status" value="1"/>
</dbReference>
<dbReference type="PANTHER" id="PTHR24332:SF16">
    <property type="entry name" value="HOMEOBOX PROTEIN CDX-1"/>
    <property type="match status" value="1"/>
</dbReference>
<dbReference type="Pfam" id="PF04731">
    <property type="entry name" value="Caudal_act"/>
    <property type="match status" value="1"/>
</dbReference>
<dbReference type="Pfam" id="PF00046">
    <property type="entry name" value="Homeodomain"/>
    <property type="match status" value="1"/>
</dbReference>
<dbReference type="PRINTS" id="PR00024">
    <property type="entry name" value="HOMEOBOX"/>
</dbReference>
<dbReference type="PRINTS" id="PR00031">
    <property type="entry name" value="HTHREPRESSR"/>
</dbReference>
<dbReference type="SMART" id="SM00389">
    <property type="entry name" value="HOX"/>
    <property type="match status" value="1"/>
</dbReference>
<dbReference type="SUPFAM" id="SSF46689">
    <property type="entry name" value="Homeodomain-like"/>
    <property type="match status" value="1"/>
</dbReference>
<dbReference type="PROSITE" id="PS00027">
    <property type="entry name" value="HOMEOBOX_1"/>
    <property type="match status" value="1"/>
</dbReference>
<dbReference type="PROSITE" id="PS50071">
    <property type="entry name" value="HOMEOBOX_2"/>
    <property type="match status" value="1"/>
</dbReference>
<gene>
    <name type="primary">cdx1</name>
    <name type="synonym">cad2</name>
</gene>
<accession>Q91622</accession>
<sequence length="263" mass="29201">MYVGYLLDKDNNMYPNPVRHPGLNLNPQNYVPAPPQYSDFPSYHHVPGINSDPHHGQPGGTWSSYTPSREDWHPYGPGPGASSANPTQIAFSPSDYNPVQPPGSGLLPPSINSSVPPLSPSAQRADPYEWMRRTGVPTTTTTTNGKTRTKDKYRVVYTDHQRLELEKEFHYSRYITIRRKAELAAALGLTERQVKIWFQNRRAKERKVNKKKMQQQSQQASTTTPTPPSVGTTAGMGGLCSSSSSNSNLVSPSSMPIKEEYLS</sequence>
<evidence type="ECO:0000250" key="1">
    <source>
        <dbReference type="UniProtKB" id="P47902"/>
    </source>
</evidence>
<evidence type="ECO:0000255" key="2">
    <source>
        <dbReference type="PROSITE-ProRule" id="PRU00108"/>
    </source>
</evidence>
<evidence type="ECO:0000256" key="3">
    <source>
        <dbReference type="SAM" id="MobiDB-lite"/>
    </source>
</evidence>
<evidence type="ECO:0000305" key="4"/>
<keyword id="KW-0010">Activator</keyword>
<keyword id="KW-0238">DNA-binding</keyword>
<keyword id="KW-0371">Homeobox</keyword>
<keyword id="KW-0539">Nucleus</keyword>
<keyword id="KW-1185">Reference proteome</keyword>
<keyword id="KW-0804">Transcription</keyword>
<keyword id="KW-0805">Transcription regulation</keyword>
<comment type="function">
    <text evidence="1">Plays a role in transcriptional regulation. Involved in activated KRAS-mediated transcriptional activation of PRKD1. Binds to the PRKD1 promoter. Could play a role in the terminal differentiation of the intestine. Binds preferentially to methylated DNA.</text>
</comment>
<comment type="subcellular location">
    <subcellularLocation>
        <location evidence="2">Nucleus</location>
    </subcellularLocation>
</comment>
<comment type="similarity">
    <text evidence="4">Belongs to the Caudal homeobox family.</text>
</comment>
<protein>
    <recommendedName>
        <fullName>Homeobox protein CDX-1</fullName>
        <shortName>xCAD2</shortName>
    </recommendedName>
</protein>
<reference key="1">
    <citation type="submission" date="1993-12" db="EMBL/GenBank/DDBJ databases">
        <title>Xenopus Xcad2 is a homolog of chicken CHox-cad.</title>
        <authorList>
            <person name="Tram W."/>
            <person name="Inoue K."/>
            <person name="Blumberg B."/>
            <person name="Cho K.W.Y."/>
        </authorList>
    </citation>
    <scope>NUCLEOTIDE SEQUENCE [MRNA]</scope>
</reference>
<name>CDX1_XENLA</name>